<proteinExistence type="evidence at protein level"/>
<feature type="transit peptide" description="Mitochondrion" evidence="3">
    <location>
        <begin position="1"/>
        <end position="19"/>
    </location>
</feature>
<feature type="chain" id="PRO_0000271413" description="Aldehyde dehydrogenase X, mitochondrial">
    <location>
        <begin position="20"/>
        <end position="519"/>
    </location>
</feature>
<feature type="active site" description="Proton acceptor" evidence="4 5">
    <location>
        <position position="287"/>
    </location>
</feature>
<feature type="active site" description="Nucleophile" evidence="4 5">
    <location>
        <position position="321"/>
    </location>
</feature>
<feature type="binding site" evidence="1">
    <location>
        <begin position="264"/>
        <end position="269"/>
    </location>
    <ligand>
        <name>NAD(+)</name>
        <dbReference type="ChEBI" id="CHEBI:57540"/>
    </ligand>
</feature>
<feature type="site" description="Transition state stabilizer" evidence="1">
    <location>
        <position position="188"/>
    </location>
</feature>
<feature type="modified residue" description="N6-acetyllysine" evidence="2">
    <location>
        <position position="53"/>
    </location>
</feature>
<feature type="modified residue" description="N6-acetyllysine; alternate" evidence="2">
    <location>
        <position position="54"/>
    </location>
</feature>
<feature type="modified residue" description="N6-succinyllysine; alternate" evidence="2">
    <location>
        <position position="54"/>
    </location>
</feature>
<feature type="modified residue" description="N6-acetyllysine; alternate" evidence="2">
    <location>
        <position position="366"/>
    </location>
</feature>
<feature type="modified residue" description="N6-succinyllysine; alternate" evidence="2">
    <location>
        <position position="366"/>
    </location>
</feature>
<feature type="modified residue" description="N6-acetyllysine; alternate" evidence="2">
    <location>
        <position position="385"/>
    </location>
</feature>
<feature type="modified residue" description="N6-succinyllysine; alternate" evidence="2">
    <location>
        <position position="385"/>
    </location>
</feature>
<feature type="modified residue" description="N6-acetyllysine; alternate" evidence="2">
    <location>
        <position position="401"/>
    </location>
</feature>
<feature type="modified residue" description="N6-succinyllysine; alternate" evidence="2">
    <location>
        <position position="401"/>
    </location>
</feature>
<feature type="modified residue" description="N6-acetyllysine; alternate" evidence="2">
    <location>
        <position position="428"/>
    </location>
</feature>
<feature type="modified residue" description="N6-succinyllysine; alternate" evidence="2">
    <location>
        <position position="428"/>
    </location>
</feature>
<feature type="modified residue" description="N6-acetyllysine" evidence="2">
    <location>
        <position position="431"/>
    </location>
</feature>
<sequence>MLNARFLVPRLLCLQGRTTSYSTAAALPNPIPNPEIRYNQLFINNEWHDAVSKKTFPTVNPTTGEVIGHVAEGDRADVDLAVRAAREAFRLGSPWRRMDASERGRLLNRLADLVERDRVYLASLETLDNGKPFQESYVLDLDEVIKVYRYLAGWADKWHGKTIPMDGEHFCFTRHEPVGVCGQIIPWNFPLVMQGWKLAPALATGNTVVMKVAEQTPLSALYLASLIKEAGFPPGVVNIITGYGPTAGAAIAQHMDVDKVAFTGSTEVGHLIQKAAGDSNLKRVTLELGGKSPSIVLADADMDHAVDQCHEALFFNMGQCCCAGSRTFVEESIYHEFLERTVEKAKKRKVGNPFELDTQQGPQVDKEQFEKILGYIRLGQKEGAKLLCGGERFGERGFFIKPTVFGNVQDDMRIAREEIFGPVQPLFKFKKIEEVIQRANNTRYGLAAAVFTRDLDKALYFSQALQAGTVWVNTYNIVTCHTPFGGFKESGNGRELGEDGLKAYTEVKTVTIKVSEKNS</sequence>
<protein>
    <recommendedName>
        <fullName>Aldehyde dehydrogenase X, mitochondrial</fullName>
        <ecNumber>1.2.1.3</ecNumber>
    </recommendedName>
    <alternativeName>
        <fullName>Aldehyde dehydrogenase family 1 member B1</fullName>
    </alternativeName>
</protein>
<organism>
    <name type="scientific">Rattus norvegicus</name>
    <name type="common">Rat</name>
    <dbReference type="NCBI Taxonomy" id="10116"/>
    <lineage>
        <taxon>Eukaryota</taxon>
        <taxon>Metazoa</taxon>
        <taxon>Chordata</taxon>
        <taxon>Craniata</taxon>
        <taxon>Vertebrata</taxon>
        <taxon>Euteleostomi</taxon>
        <taxon>Mammalia</taxon>
        <taxon>Eutheria</taxon>
        <taxon>Euarchontoglires</taxon>
        <taxon>Glires</taxon>
        <taxon>Rodentia</taxon>
        <taxon>Myomorpha</taxon>
        <taxon>Muroidea</taxon>
        <taxon>Muridae</taxon>
        <taxon>Murinae</taxon>
        <taxon>Rattus</taxon>
    </lineage>
</organism>
<gene>
    <name type="primary">Aldh1b1</name>
    <name type="synonym">Aldhx</name>
</gene>
<comment type="function">
    <text evidence="1">ALDHs play a major role in the detoxification of alcohol-derived acetaldehyde. They are involved in the metabolism of corticosteroids, biogenic amines, neurotransmitters, and lipid peroxidation (By similarity).</text>
</comment>
<comment type="catalytic activity">
    <reaction>
        <text>an aldehyde + NAD(+) + H2O = a carboxylate + NADH + 2 H(+)</text>
        <dbReference type="Rhea" id="RHEA:16185"/>
        <dbReference type="ChEBI" id="CHEBI:15377"/>
        <dbReference type="ChEBI" id="CHEBI:15378"/>
        <dbReference type="ChEBI" id="CHEBI:17478"/>
        <dbReference type="ChEBI" id="CHEBI:29067"/>
        <dbReference type="ChEBI" id="CHEBI:57540"/>
        <dbReference type="ChEBI" id="CHEBI:57945"/>
        <dbReference type="EC" id="1.2.1.3"/>
    </reaction>
</comment>
<comment type="pathway">
    <text>Alcohol metabolism; ethanol degradation; acetate from ethanol: step 2/2.</text>
</comment>
<comment type="subunit">
    <text evidence="1">Homotetramer.</text>
</comment>
<comment type="subcellular location">
    <subcellularLocation>
        <location evidence="1">Mitochondrion matrix</location>
    </subcellularLocation>
</comment>
<comment type="similarity">
    <text evidence="6">Belongs to the aldehyde dehydrogenase family.</text>
</comment>
<keyword id="KW-0007">Acetylation</keyword>
<keyword id="KW-0903">Direct protein sequencing</keyword>
<keyword id="KW-0496">Mitochondrion</keyword>
<keyword id="KW-0520">NAD</keyword>
<keyword id="KW-0560">Oxidoreductase</keyword>
<keyword id="KW-1185">Reference proteome</keyword>
<keyword id="KW-0809">Transit peptide</keyword>
<reference key="1">
    <citation type="journal article" date="2004" name="Genome Res.">
        <title>The status, quality, and expansion of the NIH full-length cDNA project: the Mammalian Gene Collection (MGC).</title>
        <authorList>
            <consortium name="The MGC Project Team"/>
        </authorList>
    </citation>
    <scope>NUCLEOTIDE SEQUENCE [LARGE SCALE MRNA]</scope>
    <source>
        <tissue>Kidney</tissue>
    </source>
</reference>
<reference key="2">
    <citation type="submission" date="2007-04" db="UniProtKB">
        <authorList>
            <person name="Lubec G."/>
            <person name="Afjehi-Sadat L."/>
            <person name="Chen W.-Q."/>
        </authorList>
    </citation>
    <scope>PROTEIN SEQUENCE OF 55-75; 162-174; 327-340 AND 444-453</scope>
    <scope>IDENTIFICATION BY MASS SPECTROMETRY</scope>
    <source>
        <strain>Sprague-Dawley</strain>
        <tissue>Hippocampus</tissue>
        <tissue>Spinal cord</tissue>
    </source>
</reference>
<dbReference type="EC" id="1.2.1.3"/>
<dbReference type="EMBL" id="BC081884">
    <property type="protein sequence ID" value="AAH81884.1"/>
    <property type="molecule type" value="mRNA"/>
</dbReference>
<dbReference type="RefSeq" id="NP_001011975.1">
    <property type="nucleotide sequence ID" value="NM_001011975.1"/>
</dbReference>
<dbReference type="SMR" id="Q66HF8"/>
<dbReference type="FunCoup" id="Q66HF8">
    <property type="interactions" value="1721"/>
</dbReference>
<dbReference type="STRING" id="10116.ENSRNOP00000015282"/>
<dbReference type="GlyGen" id="Q66HF8">
    <property type="glycosylation" value="1 site"/>
</dbReference>
<dbReference type="iPTMnet" id="Q66HF8"/>
<dbReference type="PhosphoSitePlus" id="Q66HF8"/>
<dbReference type="PaxDb" id="10116-ENSRNOP00000015282"/>
<dbReference type="GeneID" id="298079"/>
<dbReference type="KEGG" id="rno:298079"/>
<dbReference type="UCSC" id="RGD:1306737">
    <property type="organism name" value="rat"/>
</dbReference>
<dbReference type="AGR" id="RGD:1306737"/>
<dbReference type="CTD" id="219"/>
<dbReference type="RGD" id="1306737">
    <property type="gene designation" value="Aldh1b1"/>
</dbReference>
<dbReference type="eggNOG" id="KOG2450">
    <property type="taxonomic scope" value="Eukaryota"/>
</dbReference>
<dbReference type="InParanoid" id="Q66HF8"/>
<dbReference type="OrthoDB" id="18453at9989"/>
<dbReference type="PhylomeDB" id="Q66HF8"/>
<dbReference type="Reactome" id="R-RNO-71384">
    <property type="pathway name" value="Ethanol oxidation"/>
</dbReference>
<dbReference type="Reactome" id="R-RNO-9837999">
    <property type="pathway name" value="Mitochondrial protein degradation"/>
</dbReference>
<dbReference type="UniPathway" id="UPA00780">
    <property type="reaction ID" value="UER00768"/>
</dbReference>
<dbReference type="PRO" id="PR:Q66HF8"/>
<dbReference type="Proteomes" id="UP000002494">
    <property type="component" value="Unplaced"/>
</dbReference>
<dbReference type="GO" id="GO:0005759">
    <property type="term" value="C:mitochondrial matrix"/>
    <property type="evidence" value="ECO:0007669"/>
    <property type="project" value="UniProtKB-SubCell"/>
</dbReference>
<dbReference type="GO" id="GO:0004029">
    <property type="term" value="F:aldehyde dehydrogenase (NAD+) activity"/>
    <property type="evidence" value="ECO:0000318"/>
    <property type="project" value="GO_Central"/>
</dbReference>
<dbReference type="GO" id="GO:0006068">
    <property type="term" value="P:ethanol catabolic process"/>
    <property type="evidence" value="ECO:0007669"/>
    <property type="project" value="UniProtKB-UniPathway"/>
</dbReference>
<dbReference type="CDD" id="cd07141">
    <property type="entry name" value="ALDH_F1AB_F2_RALDH1"/>
    <property type="match status" value="1"/>
</dbReference>
<dbReference type="FunFam" id="3.40.605.10:FF:000029">
    <property type="entry name" value="Aldehyde dehydrogenase, mitochondrial"/>
    <property type="match status" value="1"/>
</dbReference>
<dbReference type="FunFam" id="3.40.605.10:FF:000026">
    <property type="entry name" value="Aldehyde dehydrogenase, putative"/>
    <property type="match status" value="1"/>
</dbReference>
<dbReference type="FunFam" id="3.40.309.10:FF:000001">
    <property type="entry name" value="Mitochondrial aldehyde dehydrogenase 2"/>
    <property type="match status" value="1"/>
</dbReference>
<dbReference type="Gene3D" id="3.40.605.10">
    <property type="entry name" value="Aldehyde Dehydrogenase, Chain A, domain 1"/>
    <property type="match status" value="1"/>
</dbReference>
<dbReference type="Gene3D" id="3.40.309.10">
    <property type="entry name" value="Aldehyde Dehydrogenase, Chain A, domain 2"/>
    <property type="match status" value="1"/>
</dbReference>
<dbReference type="InterPro" id="IPR016161">
    <property type="entry name" value="Ald_DH/histidinol_DH"/>
</dbReference>
<dbReference type="InterPro" id="IPR016163">
    <property type="entry name" value="Ald_DH_C"/>
</dbReference>
<dbReference type="InterPro" id="IPR016160">
    <property type="entry name" value="Ald_DH_CS_CYS"/>
</dbReference>
<dbReference type="InterPro" id="IPR029510">
    <property type="entry name" value="Ald_DH_CS_GLU"/>
</dbReference>
<dbReference type="InterPro" id="IPR016162">
    <property type="entry name" value="Ald_DH_N"/>
</dbReference>
<dbReference type="InterPro" id="IPR015590">
    <property type="entry name" value="Aldehyde_DH_dom"/>
</dbReference>
<dbReference type="PANTHER" id="PTHR11699">
    <property type="entry name" value="ALDEHYDE DEHYDROGENASE-RELATED"/>
    <property type="match status" value="1"/>
</dbReference>
<dbReference type="Pfam" id="PF00171">
    <property type="entry name" value="Aldedh"/>
    <property type="match status" value="1"/>
</dbReference>
<dbReference type="SUPFAM" id="SSF53720">
    <property type="entry name" value="ALDH-like"/>
    <property type="match status" value="1"/>
</dbReference>
<dbReference type="PROSITE" id="PS00070">
    <property type="entry name" value="ALDEHYDE_DEHYDR_CYS"/>
    <property type="match status" value="1"/>
</dbReference>
<dbReference type="PROSITE" id="PS00687">
    <property type="entry name" value="ALDEHYDE_DEHYDR_GLU"/>
    <property type="match status" value="1"/>
</dbReference>
<name>AL1B1_RAT</name>
<evidence type="ECO:0000250" key="1"/>
<evidence type="ECO:0000250" key="2">
    <source>
        <dbReference type="UniProtKB" id="Q9CZS1"/>
    </source>
</evidence>
<evidence type="ECO:0000255" key="3"/>
<evidence type="ECO:0000255" key="4">
    <source>
        <dbReference type="PROSITE-ProRule" id="PRU10007"/>
    </source>
</evidence>
<evidence type="ECO:0000255" key="5">
    <source>
        <dbReference type="PROSITE-ProRule" id="PRU10008"/>
    </source>
</evidence>
<evidence type="ECO:0000305" key="6"/>
<accession>Q66HF8</accession>